<comment type="function">
    <text>Alpha-L-fucosidase is responsible for hydrolyzing the alpha-1,6-linked fucose joined to the reducing-end N-acetylglucosamine of the carbohydrate moieties of glycoproteins.</text>
</comment>
<comment type="catalytic activity">
    <reaction evidence="3">
        <text>an alpha-L-fucoside + H2O = L-fucose + an alcohol</text>
        <dbReference type="Rhea" id="RHEA:12288"/>
        <dbReference type="ChEBI" id="CHEBI:2181"/>
        <dbReference type="ChEBI" id="CHEBI:15377"/>
        <dbReference type="ChEBI" id="CHEBI:28349"/>
        <dbReference type="ChEBI" id="CHEBI:30879"/>
        <dbReference type="EC" id="3.2.1.51"/>
    </reaction>
</comment>
<comment type="subunit">
    <text evidence="1">Homotetramer.</text>
</comment>
<comment type="interaction">
    <interactant intactId="EBI-9050116">
        <id>Q9BTY2</id>
    </interactant>
    <interactant intactId="EBI-11978177">
        <id>Q96NT3-2</id>
        <label>GUCD1</label>
    </interactant>
    <organismsDiffer>false</organismsDiffer>
    <experiments>3</experiments>
</comment>
<comment type="interaction">
    <interactant intactId="EBI-9050116">
        <id>Q9BTY2</id>
    </interactant>
    <interactant intactId="EBI-740785">
        <id>P49639</id>
        <label>HOXA1</label>
    </interactant>
    <organismsDiffer>false</organismsDiffer>
    <experiments>3</experiments>
</comment>
<comment type="interaction">
    <interactant intactId="EBI-9050116">
        <id>Q9BTY2</id>
    </interactant>
    <interactant intactId="EBI-739863">
        <id>Q9BQ66</id>
        <label>KRTAP4-12</label>
    </interactant>
    <organismsDiffer>false</organismsDiffer>
    <experiments>3</experiments>
</comment>
<comment type="interaction">
    <interactant intactId="EBI-9050116">
        <id>Q9BTY2</id>
    </interactant>
    <interactant intactId="EBI-11958178">
        <id>Q701N4</id>
        <label>KRTAP5-2</label>
    </interactant>
    <organismsDiffer>false</organismsDiffer>
    <experiments>3</experiments>
</comment>
<comment type="interaction">
    <interactant intactId="EBI-9050116">
        <id>Q9BTY2</id>
    </interactant>
    <interactant intactId="EBI-11974251">
        <id>Q6L8H2</id>
        <label>KRTAP5-3</label>
    </interactant>
    <organismsDiffer>false</organismsDiffer>
    <experiments>3</experiments>
</comment>
<comment type="interaction">
    <interactant intactId="EBI-9050116">
        <id>Q9BTY2</id>
    </interactant>
    <interactant intactId="EBI-11962058">
        <id>Q5T7P2</id>
        <label>LCE1A</label>
    </interactant>
    <organismsDiffer>false</organismsDiffer>
    <experiments>3</experiments>
</comment>
<comment type="interaction">
    <interactant intactId="EBI-9050116">
        <id>Q9BTY2</id>
    </interactant>
    <interactant intactId="EBI-10245913">
        <id>Q5T7P3</id>
        <label>LCE1B</label>
    </interactant>
    <organismsDiffer>false</organismsDiffer>
    <experiments>3</experiments>
</comment>
<comment type="interaction">
    <interactant intactId="EBI-9050116">
        <id>Q9BTY2</id>
    </interactant>
    <interactant intactId="EBI-11955335">
        <id>Q5T753</id>
        <label>LCE1E</label>
    </interactant>
    <organismsDiffer>false</organismsDiffer>
    <experiments>3</experiments>
</comment>
<comment type="interaction">
    <interactant intactId="EBI-9050116">
        <id>Q9BTY2</id>
    </interactant>
    <interactant intactId="EBI-10246358">
        <id>Q5TA78</id>
        <label>LCE4A</label>
    </interactant>
    <organismsDiffer>false</organismsDiffer>
    <experiments>3</experiments>
</comment>
<comment type="interaction">
    <interactant intactId="EBI-9050116">
        <id>Q9BTY2</id>
    </interactant>
    <interactant intactId="EBI-748397">
        <id>P50222</id>
        <label>MEOX2</label>
    </interactant>
    <organismsDiffer>false</organismsDiffer>
    <experiments>4</experiments>
</comment>
<comment type="interaction">
    <interactant intactId="EBI-9050116">
        <id>Q9BTY2</id>
    </interactant>
    <interactant intactId="EBI-1210753">
        <id>Q7Z417</id>
        <label>NUFIP2</label>
    </interactant>
    <organismsDiffer>false</organismsDiffer>
    <experiments>3</experiments>
</comment>
<comment type="interaction">
    <interactant intactId="EBI-9050116">
        <id>Q9BTY2</id>
    </interactant>
    <interactant intactId="EBI-714158">
        <id>Q13526</id>
        <label>PIN1</label>
    </interactant>
    <organismsDiffer>false</organismsDiffer>
    <experiments>3</experiments>
</comment>
<comment type="interaction">
    <interactant intactId="EBI-9050116">
        <id>Q9BTY2</id>
    </interactant>
    <interactant intactId="EBI-12076664">
        <id>O14787-2</id>
        <label>TNPO2</label>
    </interactant>
    <organismsDiffer>false</organismsDiffer>
    <experiments>3</experiments>
</comment>
<comment type="interaction">
    <interactant intactId="EBI-9050116">
        <id>Q9BTY2</id>
    </interactant>
    <interactant intactId="EBI-11957238">
        <id>Q2TAL6</id>
        <label>VWC2</label>
    </interactant>
    <organismsDiffer>false</organismsDiffer>
    <experiments>3</experiments>
</comment>
<comment type="interaction">
    <interactant intactId="EBI-9050116">
        <id>Q9BTY2</id>
    </interactant>
    <interactant intactId="EBI-8058160">
        <id>O96014</id>
        <label>WNT11</label>
    </interactant>
    <organismsDiffer>false</organismsDiffer>
    <experiments>3</experiments>
</comment>
<comment type="subcellular location">
    <subcellularLocation>
        <location evidence="10">Secreted</location>
    </subcellularLocation>
</comment>
<comment type="alternative products">
    <event type="alternative splicing"/>
    <isoform>
        <id>Q9BTY2-1</id>
        <name>1</name>
        <sequence type="displayed"/>
    </isoform>
    <isoform>
        <id>Q9BTY2-2</id>
        <name>2</name>
        <sequence type="described" ref="VSP_057004 VSP_057005"/>
    </isoform>
</comment>
<comment type="similarity">
    <text evidence="10">Belongs to the glycosyl hydrolase 29 family.</text>
</comment>
<reference key="1">
    <citation type="journal article" date="2003" name="Genome Res.">
        <title>The secreted protein discovery initiative (SPDI), a large-scale effort to identify novel human secreted and transmembrane proteins: a bioinformatics assessment.</title>
        <authorList>
            <person name="Clark H.F."/>
            <person name="Gurney A.L."/>
            <person name="Abaya E."/>
            <person name="Baker K."/>
            <person name="Baldwin D.T."/>
            <person name="Brush J."/>
            <person name="Chen J."/>
            <person name="Chow B."/>
            <person name="Chui C."/>
            <person name="Crowley C."/>
            <person name="Currell B."/>
            <person name="Deuel B."/>
            <person name="Dowd P."/>
            <person name="Eaton D."/>
            <person name="Foster J.S."/>
            <person name="Grimaldi C."/>
            <person name="Gu Q."/>
            <person name="Hass P.E."/>
            <person name="Heldens S."/>
            <person name="Huang A."/>
            <person name="Kim H.S."/>
            <person name="Klimowski L."/>
            <person name="Jin Y."/>
            <person name="Johnson S."/>
            <person name="Lee J."/>
            <person name="Lewis L."/>
            <person name="Liao D."/>
            <person name="Mark M.R."/>
            <person name="Robbie E."/>
            <person name="Sanchez C."/>
            <person name="Schoenfeld J."/>
            <person name="Seshagiri S."/>
            <person name="Simmons L."/>
            <person name="Singh J."/>
            <person name="Smith V."/>
            <person name="Stinson J."/>
            <person name="Vagts A."/>
            <person name="Vandlen R.L."/>
            <person name="Watanabe C."/>
            <person name="Wieand D."/>
            <person name="Woods K."/>
            <person name="Xie M.-H."/>
            <person name="Yansura D.G."/>
            <person name="Yi S."/>
            <person name="Yu G."/>
            <person name="Yuan J."/>
            <person name="Zhang M."/>
            <person name="Zhang Z."/>
            <person name="Goddard A.D."/>
            <person name="Wood W.I."/>
            <person name="Godowski P.J."/>
            <person name="Gray A.M."/>
        </authorList>
    </citation>
    <scope>NUCLEOTIDE SEQUENCE [LARGE SCALE MRNA] (ISOFORM 1)</scope>
    <scope>VARIANTS VAL-356 AND TYR-371</scope>
</reference>
<reference key="2">
    <citation type="journal article" date="2004" name="Nat. Genet.">
        <title>Complete sequencing and characterization of 21,243 full-length human cDNAs.</title>
        <authorList>
            <person name="Ota T."/>
            <person name="Suzuki Y."/>
            <person name="Nishikawa T."/>
            <person name="Otsuki T."/>
            <person name="Sugiyama T."/>
            <person name="Irie R."/>
            <person name="Wakamatsu A."/>
            <person name="Hayashi K."/>
            <person name="Sato H."/>
            <person name="Nagai K."/>
            <person name="Kimura K."/>
            <person name="Makita H."/>
            <person name="Sekine M."/>
            <person name="Obayashi M."/>
            <person name="Nishi T."/>
            <person name="Shibahara T."/>
            <person name="Tanaka T."/>
            <person name="Ishii S."/>
            <person name="Yamamoto J."/>
            <person name="Saito K."/>
            <person name="Kawai Y."/>
            <person name="Isono Y."/>
            <person name="Nakamura Y."/>
            <person name="Nagahari K."/>
            <person name="Murakami K."/>
            <person name="Yasuda T."/>
            <person name="Iwayanagi T."/>
            <person name="Wagatsuma M."/>
            <person name="Shiratori A."/>
            <person name="Sudo H."/>
            <person name="Hosoiri T."/>
            <person name="Kaku Y."/>
            <person name="Kodaira H."/>
            <person name="Kondo H."/>
            <person name="Sugawara M."/>
            <person name="Takahashi M."/>
            <person name="Kanda K."/>
            <person name="Yokoi T."/>
            <person name="Furuya T."/>
            <person name="Kikkawa E."/>
            <person name="Omura Y."/>
            <person name="Abe K."/>
            <person name="Kamihara K."/>
            <person name="Katsuta N."/>
            <person name="Sato K."/>
            <person name="Tanikawa M."/>
            <person name="Yamazaki M."/>
            <person name="Ninomiya K."/>
            <person name="Ishibashi T."/>
            <person name="Yamashita H."/>
            <person name="Murakawa K."/>
            <person name="Fujimori K."/>
            <person name="Tanai H."/>
            <person name="Kimata M."/>
            <person name="Watanabe M."/>
            <person name="Hiraoka S."/>
            <person name="Chiba Y."/>
            <person name="Ishida S."/>
            <person name="Ono Y."/>
            <person name="Takiguchi S."/>
            <person name="Watanabe S."/>
            <person name="Yosida M."/>
            <person name="Hotuta T."/>
            <person name="Kusano J."/>
            <person name="Kanehori K."/>
            <person name="Takahashi-Fujii A."/>
            <person name="Hara H."/>
            <person name="Tanase T.-O."/>
            <person name="Nomura Y."/>
            <person name="Togiya S."/>
            <person name="Komai F."/>
            <person name="Hara R."/>
            <person name="Takeuchi K."/>
            <person name="Arita M."/>
            <person name="Imose N."/>
            <person name="Musashino K."/>
            <person name="Yuuki H."/>
            <person name="Oshima A."/>
            <person name="Sasaki N."/>
            <person name="Aotsuka S."/>
            <person name="Yoshikawa Y."/>
            <person name="Matsunawa H."/>
            <person name="Ichihara T."/>
            <person name="Shiohata N."/>
            <person name="Sano S."/>
            <person name="Moriya S."/>
            <person name="Momiyama H."/>
            <person name="Satoh N."/>
            <person name="Takami S."/>
            <person name="Terashima Y."/>
            <person name="Suzuki O."/>
            <person name="Nakagawa S."/>
            <person name="Senoh A."/>
            <person name="Mizoguchi H."/>
            <person name="Goto Y."/>
            <person name="Shimizu F."/>
            <person name="Wakebe H."/>
            <person name="Hishigaki H."/>
            <person name="Watanabe T."/>
            <person name="Sugiyama A."/>
            <person name="Takemoto M."/>
            <person name="Kawakami B."/>
            <person name="Yamazaki M."/>
            <person name="Watanabe K."/>
            <person name="Kumagai A."/>
            <person name="Itakura S."/>
            <person name="Fukuzumi Y."/>
            <person name="Fujimori Y."/>
            <person name="Komiyama M."/>
            <person name="Tashiro H."/>
            <person name="Tanigami A."/>
            <person name="Fujiwara T."/>
            <person name="Ono T."/>
            <person name="Yamada K."/>
            <person name="Fujii Y."/>
            <person name="Ozaki K."/>
            <person name="Hirao M."/>
            <person name="Ohmori Y."/>
            <person name="Kawabata A."/>
            <person name="Hikiji T."/>
            <person name="Kobatake N."/>
            <person name="Inagaki H."/>
            <person name="Ikema Y."/>
            <person name="Okamoto S."/>
            <person name="Okitani R."/>
            <person name="Kawakami T."/>
            <person name="Noguchi S."/>
            <person name="Itoh T."/>
            <person name="Shigeta K."/>
            <person name="Senba T."/>
            <person name="Matsumura K."/>
            <person name="Nakajima Y."/>
            <person name="Mizuno T."/>
            <person name="Morinaga M."/>
            <person name="Sasaki M."/>
            <person name="Togashi T."/>
            <person name="Oyama M."/>
            <person name="Hata H."/>
            <person name="Watanabe M."/>
            <person name="Komatsu T."/>
            <person name="Mizushima-Sugano J."/>
            <person name="Satoh T."/>
            <person name="Shirai Y."/>
            <person name="Takahashi Y."/>
            <person name="Nakagawa K."/>
            <person name="Okumura K."/>
            <person name="Nagase T."/>
            <person name="Nomura N."/>
            <person name="Kikuchi H."/>
            <person name="Masuho Y."/>
            <person name="Yamashita R."/>
            <person name="Nakai K."/>
            <person name="Yada T."/>
            <person name="Nakamura Y."/>
            <person name="Ohara O."/>
            <person name="Isogai T."/>
            <person name="Sugano S."/>
        </authorList>
    </citation>
    <scope>NUCLEOTIDE SEQUENCE [LARGE SCALE MRNA] (ISOFORM 2)</scope>
    <source>
        <tissue>Thalamus</tissue>
    </source>
</reference>
<reference key="3">
    <citation type="journal article" date="2005" name="DNA Res.">
        <title>Signal sequence and keyword trap in silico for selection of full-length human cDNAs encoding secretion or membrane proteins from oligo-capped cDNA libraries.</title>
        <authorList>
            <person name="Otsuki T."/>
            <person name="Ota T."/>
            <person name="Nishikawa T."/>
            <person name="Hayashi K."/>
            <person name="Suzuki Y."/>
            <person name="Yamamoto J."/>
            <person name="Wakamatsu A."/>
            <person name="Kimura K."/>
            <person name="Sakamoto K."/>
            <person name="Hatano N."/>
            <person name="Kawai Y."/>
            <person name="Ishii S."/>
            <person name="Saito K."/>
            <person name="Kojima S."/>
            <person name="Sugiyama T."/>
            <person name="Ono T."/>
            <person name="Okano K."/>
            <person name="Yoshikawa Y."/>
            <person name="Aotsuka S."/>
            <person name="Sasaki N."/>
            <person name="Hattori A."/>
            <person name="Okumura K."/>
            <person name="Nagai K."/>
            <person name="Sugano S."/>
            <person name="Isogai T."/>
        </authorList>
    </citation>
    <scope>NUCLEOTIDE SEQUENCE [LARGE SCALE MRNA] (ISOFORM 1)</scope>
    <scope>VARIANTS VAL-356 AND TYR-371</scope>
    <source>
        <tissue>Placenta</tissue>
    </source>
</reference>
<reference key="4">
    <citation type="journal article" date="2003" name="Nature">
        <title>The DNA sequence and analysis of human chromosome 6.</title>
        <authorList>
            <person name="Mungall A.J."/>
            <person name="Palmer S.A."/>
            <person name="Sims S.K."/>
            <person name="Edwards C.A."/>
            <person name="Ashurst J.L."/>
            <person name="Wilming L."/>
            <person name="Jones M.C."/>
            <person name="Horton R."/>
            <person name="Hunt S.E."/>
            <person name="Scott C.E."/>
            <person name="Gilbert J.G.R."/>
            <person name="Clamp M.E."/>
            <person name="Bethel G."/>
            <person name="Milne S."/>
            <person name="Ainscough R."/>
            <person name="Almeida J.P."/>
            <person name="Ambrose K.D."/>
            <person name="Andrews T.D."/>
            <person name="Ashwell R.I.S."/>
            <person name="Babbage A.K."/>
            <person name="Bagguley C.L."/>
            <person name="Bailey J."/>
            <person name="Banerjee R."/>
            <person name="Barker D.J."/>
            <person name="Barlow K.F."/>
            <person name="Bates K."/>
            <person name="Beare D.M."/>
            <person name="Beasley H."/>
            <person name="Beasley O."/>
            <person name="Bird C.P."/>
            <person name="Blakey S.E."/>
            <person name="Bray-Allen S."/>
            <person name="Brook J."/>
            <person name="Brown A.J."/>
            <person name="Brown J.Y."/>
            <person name="Burford D.C."/>
            <person name="Burrill W."/>
            <person name="Burton J."/>
            <person name="Carder C."/>
            <person name="Carter N.P."/>
            <person name="Chapman J.C."/>
            <person name="Clark S.Y."/>
            <person name="Clark G."/>
            <person name="Clee C.M."/>
            <person name="Clegg S."/>
            <person name="Cobley V."/>
            <person name="Collier R.E."/>
            <person name="Collins J.E."/>
            <person name="Colman L.K."/>
            <person name="Corby N.R."/>
            <person name="Coville G.J."/>
            <person name="Culley K.M."/>
            <person name="Dhami P."/>
            <person name="Davies J."/>
            <person name="Dunn M."/>
            <person name="Earthrowl M.E."/>
            <person name="Ellington A.E."/>
            <person name="Evans K.A."/>
            <person name="Faulkner L."/>
            <person name="Francis M.D."/>
            <person name="Frankish A."/>
            <person name="Frankland J."/>
            <person name="French L."/>
            <person name="Garner P."/>
            <person name="Garnett J."/>
            <person name="Ghori M.J."/>
            <person name="Gilby L.M."/>
            <person name="Gillson C.J."/>
            <person name="Glithero R.J."/>
            <person name="Grafham D.V."/>
            <person name="Grant M."/>
            <person name="Gribble S."/>
            <person name="Griffiths C."/>
            <person name="Griffiths M.N.D."/>
            <person name="Hall R."/>
            <person name="Halls K.S."/>
            <person name="Hammond S."/>
            <person name="Harley J.L."/>
            <person name="Hart E.A."/>
            <person name="Heath P.D."/>
            <person name="Heathcott R."/>
            <person name="Holmes S.J."/>
            <person name="Howden P.J."/>
            <person name="Howe K.L."/>
            <person name="Howell G.R."/>
            <person name="Huckle E."/>
            <person name="Humphray S.J."/>
            <person name="Humphries M.D."/>
            <person name="Hunt A.R."/>
            <person name="Johnson C.M."/>
            <person name="Joy A.A."/>
            <person name="Kay M."/>
            <person name="Keenan S.J."/>
            <person name="Kimberley A.M."/>
            <person name="King A."/>
            <person name="Laird G.K."/>
            <person name="Langford C."/>
            <person name="Lawlor S."/>
            <person name="Leongamornlert D.A."/>
            <person name="Leversha M."/>
            <person name="Lloyd C.R."/>
            <person name="Lloyd D.M."/>
            <person name="Loveland J.E."/>
            <person name="Lovell J."/>
            <person name="Martin S."/>
            <person name="Mashreghi-Mohammadi M."/>
            <person name="Maslen G.L."/>
            <person name="Matthews L."/>
            <person name="McCann O.T."/>
            <person name="McLaren S.J."/>
            <person name="McLay K."/>
            <person name="McMurray A."/>
            <person name="Moore M.J.F."/>
            <person name="Mullikin J.C."/>
            <person name="Niblett D."/>
            <person name="Nickerson T."/>
            <person name="Novik K.L."/>
            <person name="Oliver K."/>
            <person name="Overton-Larty E.K."/>
            <person name="Parker A."/>
            <person name="Patel R."/>
            <person name="Pearce A.V."/>
            <person name="Peck A.I."/>
            <person name="Phillimore B.J.C.T."/>
            <person name="Phillips S."/>
            <person name="Plumb R.W."/>
            <person name="Porter K.M."/>
            <person name="Ramsey Y."/>
            <person name="Ranby S.A."/>
            <person name="Rice C.M."/>
            <person name="Ross M.T."/>
            <person name="Searle S.M."/>
            <person name="Sehra H.K."/>
            <person name="Sheridan E."/>
            <person name="Skuce C.D."/>
            <person name="Smith S."/>
            <person name="Smith M."/>
            <person name="Spraggon L."/>
            <person name="Squares S.L."/>
            <person name="Steward C.A."/>
            <person name="Sycamore N."/>
            <person name="Tamlyn-Hall G."/>
            <person name="Tester J."/>
            <person name="Theaker A.J."/>
            <person name="Thomas D.W."/>
            <person name="Thorpe A."/>
            <person name="Tracey A."/>
            <person name="Tromans A."/>
            <person name="Tubby B."/>
            <person name="Wall M."/>
            <person name="Wallis J.M."/>
            <person name="West A.P."/>
            <person name="White S.S."/>
            <person name="Whitehead S.L."/>
            <person name="Whittaker H."/>
            <person name="Wild A."/>
            <person name="Willey D.J."/>
            <person name="Wilmer T.E."/>
            <person name="Wood J.M."/>
            <person name="Wray P.W."/>
            <person name="Wyatt J.C."/>
            <person name="Young L."/>
            <person name="Younger R.M."/>
            <person name="Bentley D.R."/>
            <person name="Coulson A."/>
            <person name="Durbin R.M."/>
            <person name="Hubbard T."/>
            <person name="Sulston J.E."/>
            <person name="Dunham I."/>
            <person name="Rogers J."/>
            <person name="Beck S."/>
        </authorList>
    </citation>
    <scope>NUCLEOTIDE SEQUENCE [LARGE SCALE GENOMIC DNA]</scope>
</reference>
<reference key="5">
    <citation type="journal article" date="2004" name="Genome Res.">
        <title>The status, quality, and expansion of the NIH full-length cDNA project: the Mammalian Gene Collection (MGC).</title>
        <authorList>
            <consortium name="The MGC Project Team"/>
        </authorList>
    </citation>
    <scope>NUCLEOTIDE SEQUENCE [LARGE SCALE MRNA] (ISOFORM 1)</scope>
    <scope>VARIANTS VAL-356 AND TYR-371</scope>
    <source>
        <tissue>B-cell</tissue>
        <tissue>Placenta</tissue>
    </source>
</reference>
<reference key="6">
    <citation type="journal article" date="2009" name="J. Proteome Res.">
        <title>Glycoproteomics analysis of human liver tissue by combination of multiple enzyme digestion and hydrazide chemistry.</title>
        <authorList>
            <person name="Chen R."/>
            <person name="Jiang X."/>
            <person name="Sun D."/>
            <person name="Han G."/>
            <person name="Wang F."/>
            <person name="Ye M."/>
            <person name="Wang L."/>
            <person name="Zou H."/>
        </authorList>
    </citation>
    <scope>GLYCOSYLATION [LARGE SCALE ANALYSIS] AT ASN-239</scope>
    <source>
        <tissue>Liver</tissue>
    </source>
</reference>
<reference key="7">
    <citation type="journal article" date="2015" name="Cell">
        <title>A single kinase generates the majority of the secreted phosphoproteome.</title>
        <authorList>
            <person name="Tagliabracci V.S."/>
            <person name="Wiley S.E."/>
            <person name="Guo X."/>
            <person name="Kinch L.N."/>
            <person name="Durrant E."/>
            <person name="Wen J."/>
            <person name="Xiao J."/>
            <person name="Cui J."/>
            <person name="Nguyen K.B."/>
            <person name="Engel J.L."/>
            <person name="Coon J.J."/>
            <person name="Grishin N."/>
            <person name="Pinna L.A."/>
            <person name="Pagliarini D.J."/>
            <person name="Dixon J.E."/>
        </authorList>
    </citation>
    <scope>PHOSPHORYLATION AT SER-301</scope>
</reference>
<accession>Q9BTY2</accession>
<accession>E9PEB6</accession>
<accession>Q7Z6V1</accession>
<accession>Q7Z6Y2</accession>
<accession>Q8NBK4</accession>
<name>FUCO2_HUMAN</name>
<dbReference type="EC" id="3.2.1.51"/>
<dbReference type="EMBL" id="AY358551">
    <property type="protein sequence ID" value="AAQ88915.1"/>
    <property type="molecule type" value="mRNA"/>
</dbReference>
<dbReference type="EMBL" id="AK296485">
    <property type="protein sequence ID" value="BAG59123.1"/>
    <property type="molecule type" value="mRNA"/>
</dbReference>
<dbReference type="EMBL" id="AK075458">
    <property type="protein sequence ID" value="BAC11633.1"/>
    <property type="molecule type" value="mRNA"/>
</dbReference>
<dbReference type="EMBL" id="AL031320">
    <property type="status" value="NOT_ANNOTATED_CDS"/>
    <property type="molecule type" value="Genomic_DNA"/>
</dbReference>
<dbReference type="EMBL" id="BC003060">
    <property type="protein sequence ID" value="AAH03060.1"/>
    <property type="molecule type" value="mRNA"/>
</dbReference>
<dbReference type="EMBL" id="BC051268">
    <property type="protein sequence ID" value="AAH51268.1"/>
    <property type="molecule type" value="mRNA"/>
</dbReference>
<dbReference type="CCDS" id="CCDS5200.1">
    <molecule id="Q9BTY2-1"/>
</dbReference>
<dbReference type="RefSeq" id="NP_114409.2">
    <molecule id="Q9BTY2-1"/>
    <property type="nucleotide sequence ID" value="NM_032020.4"/>
</dbReference>
<dbReference type="SMR" id="Q9BTY2"/>
<dbReference type="BioGRID" id="108795">
    <property type="interactions" value="58"/>
</dbReference>
<dbReference type="FunCoup" id="Q9BTY2">
    <property type="interactions" value="448"/>
</dbReference>
<dbReference type="IntAct" id="Q9BTY2">
    <property type="interactions" value="38"/>
</dbReference>
<dbReference type="MINT" id="Q9BTY2"/>
<dbReference type="STRING" id="9606.ENSP00000002165"/>
<dbReference type="BindingDB" id="Q9BTY2"/>
<dbReference type="ChEMBL" id="CHEMBL2271"/>
<dbReference type="CAZy" id="GH29">
    <property type="family name" value="Glycoside Hydrolase Family 29"/>
</dbReference>
<dbReference type="GlyConnect" id="1608">
    <property type="glycosylation" value="3 N-Linked glycans (1 site)"/>
</dbReference>
<dbReference type="GlyCosmos" id="Q9BTY2">
    <property type="glycosylation" value="3 sites, 2 glycans"/>
</dbReference>
<dbReference type="GlyGen" id="Q9BTY2">
    <property type="glycosylation" value="4 sites, 7 N-linked glycans (2 sites)"/>
</dbReference>
<dbReference type="iPTMnet" id="Q9BTY2"/>
<dbReference type="PhosphoSitePlus" id="Q9BTY2"/>
<dbReference type="BioMuta" id="FUCA2"/>
<dbReference type="DMDM" id="254763296"/>
<dbReference type="jPOST" id="Q9BTY2"/>
<dbReference type="MassIVE" id="Q9BTY2"/>
<dbReference type="PaxDb" id="9606-ENSP00000002165"/>
<dbReference type="PeptideAtlas" id="Q9BTY2"/>
<dbReference type="ProteomicsDB" id="69462"/>
<dbReference type="ProteomicsDB" id="79030">
    <molecule id="Q9BTY2-1"/>
</dbReference>
<dbReference type="Pumba" id="Q9BTY2"/>
<dbReference type="Antibodypedia" id="33149">
    <property type="antibodies" value="342 antibodies from 28 providers"/>
</dbReference>
<dbReference type="DNASU" id="2519"/>
<dbReference type="Ensembl" id="ENST00000002165.11">
    <molecule id="Q9BTY2-1"/>
    <property type="protein sequence ID" value="ENSP00000002165.5"/>
    <property type="gene ID" value="ENSG00000001036.14"/>
</dbReference>
<dbReference type="GeneID" id="2519"/>
<dbReference type="KEGG" id="hsa:2519"/>
<dbReference type="MANE-Select" id="ENST00000002165.11">
    <property type="protein sequence ID" value="ENSP00000002165.5"/>
    <property type="RefSeq nucleotide sequence ID" value="NM_032020.5"/>
    <property type="RefSeq protein sequence ID" value="NP_114409.2"/>
</dbReference>
<dbReference type="UCSC" id="uc003qjm.4">
    <molecule id="Q9BTY2-1"/>
    <property type="organism name" value="human"/>
</dbReference>
<dbReference type="AGR" id="HGNC:4008"/>
<dbReference type="CTD" id="2519"/>
<dbReference type="DisGeNET" id="2519"/>
<dbReference type="GeneCards" id="FUCA2"/>
<dbReference type="HGNC" id="HGNC:4008">
    <property type="gene designation" value="FUCA2"/>
</dbReference>
<dbReference type="HPA" id="ENSG00000001036">
    <property type="expression patterns" value="Tissue enhanced (parathyroid)"/>
</dbReference>
<dbReference type="MIM" id="136820">
    <property type="type" value="gene+phenotype"/>
</dbReference>
<dbReference type="neXtProt" id="NX_Q9BTY2"/>
<dbReference type="OpenTargets" id="ENSG00000001036"/>
<dbReference type="PharmGKB" id="PA28424"/>
<dbReference type="VEuPathDB" id="HostDB:ENSG00000001036"/>
<dbReference type="eggNOG" id="KOG3340">
    <property type="taxonomic scope" value="Eukaryota"/>
</dbReference>
<dbReference type="GeneTree" id="ENSGT00440000035378"/>
<dbReference type="HOGENOM" id="CLU_002934_1_1_1"/>
<dbReference type="InParanoid" id="Q9BTY2"/>
<dbReference type="OMA" id="WESTDKH"/>
<dbReference type="OrthoDB" id="6039950at2759"/>
<dbReference type="PAN-GO" id="Q9BTY2">
    <property type="GO annotations" value="4 GO annotations based on evolutionary models"/>
</dbReference>
<dbReference type="PhylomeDB" id="Q9BTY2"/>
<dbReference type="TreeFam" id="TF313034"/>
<dbReference type="BRENDA" id="3.2.1.51">
    <property type="organism ID" value="2681"/>
</dbReference>
<dbReference type="PathwayCommons" id="Q9BTY2"/>
<dbReference type="Reactome" id="R-HSA-381426">
    <property type="pathway name" value="Regulation of Insulin-like Growth Factor (IGF) transport and uptake by Insulin-like Growth Factor Binding Proteins (IGFBPs)"/>
</dbReference>
<dbReference type="Reactome" id="R-HSA-6798695">
    <property type="pathway name" value="Neutrophil degranulation"/>
</dbReference>
<dbReference type="Reactome" id="R-HSA-8957275">
    <property type="pathway name" value="Post-translational protein phosphorylation"/>
</dbReference>
<dbReference type="SABIO-RK" id="Q9BTY2"/>
<dbReference type="SignaLink" id="Q9BTY2"/>
<dbReference type="BioGRID-ORCS" id="2519">
    <property type="hits" value="9 hits in 1159 CRISPR screens"/>
</dbReference>
<dbReference type="ChiTaRS" id="FUCA2">
    <property type="organism name" value="human"/>
</dbReference>
<dbReference type="GeneWiki" id="FUCA2"/>
<dbReference type="GenomeRNAi" id="2519"/>
<dbReference type="Pharos" id="Q9BTY2">
    <property type="development level" value="Tchem"/>
</dbReference>
<dbReference type="PRO" id="PR:Q9BTY2"/>
<dbReference type="Proteomes" id="UP000005640">
    <property type="component" value="Chromosome 6"/>
</dbReference>
<dbReference type="RNAct" id="Q9BTY2">
    <property type="molecule type" value="protein"/>
</dbReference>
<dbReference type="Bgee" id="ENSG00000001036">
    <property type="expression patterns" value="Expressed in decidua and 167 other cell types or tissues"/>
</dbReference>
<dbReference type="ExpressionAtlas" id="Q9BTY2">
    <property type="expression patterns" value="baseline and differential"/>
</dbReference>
<dbReference type="GO" id="GO:0035578">
    <property type="term" value="C:azurophil granule lumen"/>
    <property type="evidence" value="ECO:0000304"/>
    <property type="project" value="Reactome"/>
</dbReference>
<dbReference type="GO" id="GO:0005788">
    <property type="term" value="C:endoplasmic reticulum lumen"/>
    <property type="evidence" value="ECO:0000304"/>
    <property type="project" value="Reactome"/>
</dbReference>
<dbReference type="GO" id="GO:0070062">
    <property type="term" value="C:extracellular exosome"/>
    <property type="evidence" value="ECO:0007005"/>
    <property type="project" value="UniProtKB"/>
</dbReference>
<dbReference type="GO" id="GO:0005576">
    <property type="term" value="C:extracellular region"/>
    <property type="evidence" value="ECO:0000304"/>
    <property type="project" value="Reactome"/>
</dbReference>
<dbReference type="GO" id="GO:0005615">
    <property type="term" value="C:extracellular space"/>
    <property type="evidence" value="ECO:0000314"/>
    <property type="project" value="UniProtKB"/>
</dbReference>
<dbReference type="GO" id="GO:0005764">
    <property type="term" value="C:lysosome"/>
    <property type="evidence" value="ECO:0000318"/>
    <property type="project" value="GO_Central"/>
</dbReference>
<dbReference type="GO" id="GO:0004560">
    <property type="term" value="F:alpha-L-fucosidase activity"/>
    <property type="evidence" value="ECO:0000314"/>
    <property type="project" value="UniProtKB"/>
</dbReference>
<dbReference type="GO" id="GO:0006004">
    <property type="term" value="P:fucose metabolic process"/>
    <property type="evidence" value="ECO:0000314"/>
    <property type="project" value="UniProtKB"/>
</dbReference>
<dbReference type="GO" id="GO:0016139">
    <property type="term" value="P:glycoside catabolic process"/>
    <property type="evidence" value="ECO:0000314"/>
    <property type="project" value="UniProtKB"/>
</dbReference>
<dbReference type="GO" id="GO:2000535">
    <property type="term" value="P:regulation of entry of bacterium into host cell"/>
    <property type="evidence" value="ECO:0000315"/>
    <property type="project" value="UniProtKB"/>
</dbReference>
<dbReference type="GO" id="GO:0009617">
    <property type="term" value="P:response to bacterium"/>
    <property type="evidence" value="ECO:0000315"/>
    <property type="project" value="UniProtKB"/>
</dbReference>
<dbReference type="FunFam" id="2.60.40.1180:FF:000013">
    <property type="entry name" value="Alpha-L-fucosidase"/>
    <property type="match status" value="1"/>
</dbReference>
<dbReference type="FunFam" id="3.20.20.80:FF:000027">
    <property type="entry name" value="Alpha-L-fucosidase"/>
    <property type="match status" value="1"/>
</dbReference>
<dbReference type="Gene3D" id="3.20.20.80">
    <property type="entry name" value="Glycosidases"/>
    <property type="match status" value="1"/>
</dbReference>
<dbReference type="Gene3D" id="2.60.40.1180">
    <property type="entry name" value="Golgi alpha-mannosidase II"/>
    <property type="match status" value="1"/>
</dbReference>
<dbReference type="InterPro" id="IPR016286">
    <property type="entry name" value="FUC_metazoa-typ"/>
</dbReference>
<dbReference type="InterPro" id="IPR031919">
    <property type="entry name" value="Fucosidase_C"/>
</dbReference>
<dbReference type="InterPro" id="IPR000933">
    <property type="entry name" value="Glyco_hydro_29"/>
</dbReference>
<dbReference type="InterPro" id="IPR018526">
    <property type="entry name" value="Glyco_hydro_29_CS"/>
</dbReference>
<dbReference type="InterPro" id="IPR013780">
    <property type="entry name" value="Glyco_hydro_b"/>
</dbReference>
<dbReference type="InterPro" id="IPR017853">
    <property type="entry name" value="Glycoside_hydrolase_SF"/>
</dbReference>
<dbReference type="PANTHER" id="PTHR10030">
    <property type="entry name" value="ALPHA-L-FUCOSIDASE"/>
    <property type="match status" value="1"/>
</dbReference>
<dbReference type="PANTHER" id="PTHR10030:SF45">
    <property type="entry name" value="PLASMA ALPHA-L-FUCOSIDASE"/>
    <property type="match status" value="1"/>
</dbReference>
<dbReference type="Pfam" id="PF01120">
    <property type="entry name" value="Alpha_L_fucos"/>
    <property type="match status" value="1"/>
</dbReference>
<dbReference type="Pfam" id="PF16757">
    <property type="entry name" value="Fucosidase_C"/>
    <property type="match status" value="1"/>
</dbReference>
<dbReference type="PIRSF" id="PIRSF001092">
    <property type="entry name" value="Alpha-L-fucosidase"/>
    <property type="match status" value="1"/>
</dbReference>
<dbReference type="PRINTS" id="PR00741">
    <property type="entry name" value="GLHYDRLASE29"/>
</dbReference>
<dbReference type="SMART" id="SM00812">
    <property type="entry name" value="Alpha_L_fucos"/>
    <property type="match status" value="1"/>
</dbReference>
<dbReference type="SUPFAM" id="SSF51445">
    <property type="entry name" value="(Trans)glycosidases"/>
    <property type="match status" value="1"/>
</dbReference>
<dbReference type="PROSITE" id="PS00385">
    <property type="entry name" value="ALPHA_L_FUCOSIDASE"/>
    <property type="match status" value="1"/>
</dbReference>
<feature type="signal peptide" evidence="2">
    <location>
        <begin position="1"/>
        <end position="28"/>
    </location>
</feature>
<feature type="chain" id="PRO_0000010312" description="Plasma alpha-L-fucosidase">
    <location>
        <begin position="29"/>
        <end position="467"/>
    </location>
</feature>
<feature type="site" description="May be important for catalysis" evidence="3">
    <location>
        <position position="294"/>
    </location>
</feature>
<feature type="modified residue" description="Phosphoserine; by FAM20C" evidence="8">
    <location>
        <position position="301"/>
    </location>
</feature>
<feature type="glycosylation site" description="N-linked (GlcNAc...) asparagine" evidence="2">
    <location>
        <position position="171"/>
    </location>
</feature>
<feature type="glycosylation site" description="N-linked (GlcNAc...) asparagine" evidence="7">
    <location>
        <position position="239"/>
    </location>
</feature>
<feature type="glycosylation site" description="N-linked (GlcNAc...) asparagine" evidence="2">
    <location>
        <position position="377"/>
    </location>
</feature>
<feature type="splice variant" id="VSP_057004" description="In isoform 2." evidence="9">
    <original>GFTLWGSEYSWNWNAIDEGPKRDIVKEL</original>
    <variation>ATCRDSFMWRKSFDEYWAHTRWHHFCSF</variation>
    <location>
        <begin position="138"/>
        <end position="165"/>
    </location>
</feature>
<feature type="splice variant" id="VSP_057005" description="In isoform 2." evidence="9">
    <location>
        <begin position="166"/>
        <end position="467"/>
    </location>
</feature>
<feature type="sequence variant" id="VAR_055822" description="In dbSNP:rs11155297.">
    <original>A</original>
    <variation>E</variation>
    <location>
        <position position="233"/>
    </location>
</feature>
<feature type="sequence variant" id="VAR_022444" description="In dbSNP:rs3762002." evidence="4 5 6">
    <original>M</original>
    <variation>V</variation>
    <location>
        <position position="356"/>
    </location>
</feature>
<feature type="sequence variant" id="VAR_022445" description="In dbSNP:rs3762001." evidence="4 5 6">
    <original>H</original>
    <variation>Y</variation>
    <location>
        <position position="371"/>
    </location>
</feature>
<feature type="sequence conflict" description="In Ref. 3; BAC11633." evidence="10" ref="3">
    <original>L</original>
    <variation>P</variation>
    <location>
        <position position="400"/>
    </location>
</feature>
<keyword id="KW-0025">Alternative splicing</keyword>
<keyword id="KW-0325">Glycoprotein</keyword>
<keyword id="KW-0326">Glycosidase</keyword>
<keyword id="KW-0378">Hydrolase</keyword>
<keyword id="KW-0597">Phosphoprotein</keyword>
<keyword id="KW-1267">Proteomics identification</keyword>
<keyword id="KW-1185">Reference proteome</keyword>
<keyword id="KW-0964">Secreted</keyword>
<keyword id="KW-0732">Signal</keyword>
<proteinExistence type="evidence at protein level"/>
<gene>
    <name type="primary">FUCA2</name>
    <name type="ORF">PSEC0151</name>
    <name type="ORF">UNQ227/PRO260</name>
</gene>
<evidence type="ECO:0000250" key="1"/>
<evidence type="ECO:0000255" key="2"/>
<evidence type="ECO:0000255" key="3">
    <source>
        <dbReference type="PROSITE-ProRule" id="PRU10054"/>
    </source>
</evidence>
<evidence type="ECO:0000269" key="4">
    <source>
    </source>
</evidence>
<evidence type="ECO:0000269" key="5">
    <source>
    </source>
</evidence>
<evidence type="ECO:0000269" key="6">
    <source>
    </source>
</evidence>
<evidence type="ECO:0000269" key="7">
    <source>
    </source>
</evidence>
<evidence type="ECO:0000269" key="8">
    <source>
    </source>
</evidence>
<evidence type="ECO:0000303" key="9">
    <source>
    </source>
</evidence>
<evidence type="ECO:0000305" key="10"/>
<organism>
    <name type="scientific">Homo sapiens</name>
    <name type="common">Human</name>
    <dbReference type="NCBI Taxonomy" id="9606"/>
    <lineage>
        <taxon>Eukaryota</taxon>
        <taxon>Metazoa</taxon>
        <taxon>Chordata</taxon>
        <taxon>Craniata</taxon>
        <taxon>Vertebrata</taxon>
        <taxon>Euteleostomi</taxon>
        <taxon>Mammalia</taxon>
        <taxon>Eutheria</taxon>
        <taxon>Euarchontoglires</taxon>
        <taxon>Primates</taxon>
        <taxon>Haplorrhini</taxon>
        <taxon>Catarrhini</taxon>
        <taxon>Hominidae</taxon>
        <taxon>Homo</taxon>
    </lineage>
</organism>
<protein>
    <recommendedName>
        <fullName>Plasma alpha-L-fucosidase</fullName>
        <ecNumber>3.2.1.51</ecNumber>
    </recommendedName>
    <alternativeName>
        <fullName>Alpha-L-fucoside fucohydrolase 2</fullName>
        <shortName>Alpha-L-fucosidase 2</shortName>
    </alternativeName>
</protein>
<sequence length="467" mass="54067">MRPQELPRLAFPLLLLLLLLLPPPPCPAHSATRFDPTWESLDARQLPAWFDQAKFGIFIHWGVFSVPSFGSEWFWWYWQKEKIPKYVEFMKDNYPPSFKYEDFGPLFTAKFFNANQWADIFQASGAKYIVLTSKHHEGFTLWGSEYSWNWNAIDEGPKRDIVKELEVAIRNRTDLRFGLYYSLFEWFHPLFLEDESSSFHKRQFPVSKTLPELYELVNNYQPEVLWSDGDGGAPDQYWNSTGFLAWLYNESPVRGTVVTNDRWGAGSICKHGGFYTCSDRYNPGHLLPHKWENCMTIDKLSWGYRREAGISDYLTIEELVKQLVETVSCGGNLLMNIGPTLDGTISVVFEERLRQMGSWLKVNGEAIYETHTWRSQNDTVTPDVWYTSKPKEKLVYAIFLKWPTSGQLFLGHPKAILGATEVKLLGHGQPLNWISLEQNGIMVELPQLTIHQMPCKWGWALALTNVI</sequence>